<name>ARGB_SHEB2</name>
<keyword id="KW-0028">Amino-acid biosynthesis</keyword>
<keyword id="KW-0055">Arginine biosynthesis</keyword>
<keyword id="KW-0067">ATP-binding</keyword>
<keyword id="KW-0963">Cytoplasm</keyword>
<keyword id="KW-0418">Kinase</keyword>
<keyword id="KW-0547">Nucleotide-binding</keyword>
<keyword id="KW-0808">Transferase</keyword>
<reference key="1">
    <citation type="submission" date="2008-12" db="EMBL/GenBank/DDBJ databases">
        <title>Complete sequence of chromosome of Shewanella baltica OS223.</title>
        <authorList>
            <consortium name="US DOE Joint Genome Institute"/>
            <person name="Lucas S."/>
            <person name="Copeland A."/>
            <person name="Lapidus A."/>
            <person name="Glavina del Rio T."/>
            <person name="Dalin E."/>
            <person name="Tice H."/>
            <person name="Bruce D."/>
            <person name="Goodwin L."/>
            <person name="Pitluck S."/>
            <person name="Chertkov O."/>
            <person name="Meincke L."/>
            <person name="Brettin T."/>
            <person name="Detter J.C."/>
            <person name="Han C."/>
            <person name="Kuske C.R."/>
            <person name="Larimer F."/>
            <person name="Land M."/>
            <person name="Hauser L."/>
            <person name="Kyrpides N."/>
            <person name="Ovchinnikova G."/>
            <person name="Brettar I."/>
            <person name="Rodrigues J."/>
            <person name="Konstantinidis K."/>
            <person name="Tiedje J."/>
        </authorList>
    </citation>
    <scope>NUCLEOTIDE SEQUENCE [LARGE SCALE GENOMIC DNA]</scope>
    <source>
        <strain>OS223</strain>
    </source>
</reference>
<comment type="function">
    <text evidence="1">Catalyzes the ATP-dependent phosphorylation of N-acetyl-L-glutamate.</text>
</comment>
<comment type="catalytic activity">
    <reaction evidence="1">
        <text>N-acetyl-L-glutamate + ATP = N-acetyl-L-glutamyl 5-phosphate + ADP</text>
        <dbReference type="Rhea" id="RHEA:14629"/>
        <dbReference type="ChEBI" id="CHEBI:30616"/>
        <dbReference type="ChEBI" id="CHEBI:44337"/>
        <dbReference type="ChEBI" id="CHEBI:57936"/>
        <dbReference type="ChEBI" id="CHEBI:456216"/>
        <dbReference type="EC" id="2.7.2.8"/>
    </reaction>
</comment>
<comment type="pathway">
    <text evidence="1">Amino-acid biosynthesis; L-arginine biosynthesis; N(2)-acetyl-L-ornithine from L-glutamate: step 2/4.</text>
</comment>
<comment type="subcellular location">
    <subcellularLocation>
        <location evidence="1">Cytoplasm</location>
    </subcellularLocation>
</comment>
<comment type="similarity">
    <text evidence="1">Belongs to the acetylglutamate kinase family. ArgB subfamily.</text>
</comment>
<gene>
    <name evidence="1" type="primary">argB</name>
    <name type="ordered locus">Sbal223_4013</name>
</gene>
<organism>
    <name type="scientific">Shewanella baltica (strain OS223)</name>
    <dbReference type="NCBI Taxonomy" id="407976"/>
    <lineage>
        <taxon>Bacteria</taxon>
        <taxon>Pseudomonadati</taxon>
        <taxon>Pseudomonadota</taxon>
        <taxon>Gammaproteobacteria</taxon>
        <taxon>Alteromonadales</taxon>
        <taxon>Shewanellaceae</taxon>
        <taxon>Shewanella</taxon>
    </lineage>
</organism>
<protein>
    <recommendedName>
        <fullName evidence="1">Acetylglutamate kinase</fullName>
        <ecNumber evidence="1">2.7.2.8</ecNumber>
    </recommendedName>
    <alternativeName>
        <fullName evidence="1">N-acetyl-L-glutamate 5-phosphotransferase</fullName>
    </alternativeName>
    <alternativeName>
        <fullName evidence="1">NAG kinase</fullName>
        <shortName evidence="1">NAGK</shortName>
    </alternativeName>
</protein>
<feature type="chain" id="PRO_1000118363" description="Acetylglutamate kinase">
    <location>
        <begin position="1"/>
        <end position="260"/>
    </location>
</feature>
<feature type="binding site" evidence="1">
    <location>
        <begin position="46"/>
        <end position="47"/>
    </location>
    <ligand>
        <name>substrate</name>
    </ligand>
</feature>
<feature type="binding site" evidence="1">
    <location>
        <position position="68"/>
    </location>
    <ligand>
        <name>substrate</name>
    </ligand>
</feature>
<feature type="binding site" evidence="1">
    <location>
        <position position="160"/>
    </location>
    <ligand>
        <name>substrate</name>
    </ligand>
</feature>
<feature type="site" description="Transition state stabilizer" evidence="1">
    <location>
        <position position="11"/>
    </location>
</feature>
<feature type="site" description="Transition state stabilizer" evidence="1">
    <location>
        <position position="219"/>
    </location>
</feature>
<sequence length="260" mass="26844">MSTNNSVLVLKVGGALLQCEMGMARLMDTAAAMLANGQQVLMVHGGGCLVDEQLAANGMETVKLEGLRVTPPEQMPIIAGALAGTSNKILQGAATKAGIVSVGMSLADGNTVSAKIKDERLGLVGEVTPKDGAYLKFILAQGWMPICSSIAMMDDGQMLNVNADQAATALAKLVGGKLVLLSDVSGVLDGKGQLIHSLNGKQIADLVKQGVIEKGMKVKVEAALEVAQWMGQAVQVASWRDASQLIALAKGEAVGTQIQP</sequence>
<proteinExistence type="inferred from homology"/>
<accession>B8EBG2</accession>
<dbReference type="EC" id="2.7.2.8" evidence="1"/>
<dbReference type="EMBL" id="CP001252">
    <property type="protein sequence ID" value="ACK48486.1"/>
    <property type="molecule type" value="Genomic_DNA"/>
</dbReference>
<dbReference type="RefSeq" id="WP_011848138.1">
    <property type="nucleotide sequence ID" value="NC_011663.1"/>
</dbReference>
<dbReference type="SMR" id="B8EBG2"/>
<dbReference type="GeneID" id="11774198"/>
<dbReference type="KEGG" id="sbp:Sbal223_4013"/>
<dbReference type="HOGENOM" id="CLU_053680_1_1_6"/>
<dbReference type="UniPathway" id="UPA00068">
    <property type="reaction ID" value="UER00107"/>
</dbReference>
<dbReference type="Proteomes" id="UP000002507">
    <property type="component" value="Chromosome"/>
</dbReference>
<dbReference type="GO" id="GO:0005737">
    <property type="term" value="C:cytoplasm"/>
    <property type="evidence" value="ECO:0007669"/>
    <property type="project" value="UniProtKB-SubCell"/>
</dbReference>
<dbReference type="GO" id="GO:0003991">
    <property type="term" value="F:acetylglutamate kinase activity"/>
    <property type="evidence" value="ECO:0007669"/>
    <property type="project" value="UniProtKB-UniRule"/>
</dbReference>
<dbReference type="GO" id="GO:0005524">
    <property type="term" value="F:ATP binding"/>
    <property type="evidence" value="ECO:0007669"/>
    <property type="project" value="UniProtKB-UniRule"/>
</dbReference>
<dbReference type="GO" id="GO:0042450">
    <property type="term" value="P:arginine biosynthetic process via ornithine"/>
    <property type="evidence" value="ECO:0007669"/>
    <property type="project" value="UniProtKB-UniRule"/>
</dbReference>
<dbReference type="GO" id="GO:0006526">
    <property type="term" value="P:L-arginine biosynthetic process"/>
    <property type="evidence" value="ECO:0007669"/>
    <property type="project" value="UniProtKB-UniPathway"/>
</dbReference>
<dbReference type="FunFam" id="3.40.1160.10:FF:000008">
    <property type="entry name" value="Acetylglutamate kinase"/>
    <property type="match status" value="1"/>
</dbReference>
<dbReference type="Gene3D" id="3.40.1160.10">
    <property type="entry name" value="Acetylglutamate kinase-like"/>
    <property type="match status" value="1"/>
</dbReference>
<dbReference type="HAMAP" id="MF_00082">
    <property type="entry name" value="ArgB"/>
    <property type="match status" value="1"/>
</dbReference>
<dbReference type="InterPro" id="IPR036393">
    <property type="entry name" value="AceGlu_kinase-like_sf"/>
</dbReference>
<dbReference type="InterPro" id="IPR004662">
    <property type="entry name" value="AcgluKinase_fam"/>
</dbReference>
<dbReference type="InterPro" id="IPR037528">
    <property type="entry name" value="ArgB"/>
</dbReference>
<dbReference type="InterPro" id="IPR001048">
    <property type="entry name" value="Asp/Glu/Uridylate_kinase"/>
</dbReference>
<dbReference type="NCBIfam" id="TIGR00761">
    <property type="entry name" value="argB"/>
    <property type="match status" value="1"/>
</dbReference>
<dbReference type="PANTHER" id="PTHR23342">
    <property type="entry name" value="N-ACETYLGLUTAMATE SYNTHASE"/>
    <property type="match status" value="1"/>
</dbReference>
<dbReference type="PANTHER" id="PTHR23342:SF0">
    <property type="entry name" value="N-ACETYLGLUTAMATE SYNTHASE, MITOCHONDRIAL"/>
    <property type="match status" value="1"/>
</dbReference>
<dbReference type="Pfam" id="PF00696">
    <property type="entry name" value="AA_kinase"/>
    <property type="match status" value="1"/>
</dbReference>
<dbReference type="PIRSF" id="PIRSF000728">
    <property type="entry name" value="NAGK"/>
    <property type="match status" value="1"/>
</dbReference>
<dbReference type="SUPFAM" id="SSF53633">
    <property type="entry name" value="Carbamate kinase-like"/>
    <property type="match status" value="1"/>
</dbReference>
<evidence type="ECO:0000255" key="1">
    <source>
        <dbReference type="HAMAP-Rule" id="MF_00082"/>
    </source>
</evidence>